<name>RR9_SPIOL</name>
<feature type="transit peptide" description="Chloroplast" evidence="2">
    <location>
        <begin position="1"/>
        <end position="51"/>
    </location>
</feature>
<feature type="chain" id="PRO_0000030643" description="Small ribosomal subunit protein uS9c">
    <location>
        <begin position="52"/>
        <end position="208"/>
    </location>
</feature>
<feature type="region of interest" description="Disordered" evidence="1">
    <location>
        <begin position="185"/>
        <end position="208"/>
    </location>
</feature>
<feature type="compositionally biased region" description="Basic residues" evidence="1">
    <location>
        <begin position="194"/>
        <end position="208"/>
    </location>
</feature>
<feature type="modified residue" description="N-acetylthreonine" evidence="2">
    <location>
        <position position="52"/>
    </location>
</feature>
<proteinExistence type="evidence at protein level"/>
<protein>
    <recommendedName>
        <fullName evidence="6">Small ribosomal subunit protein uS9c</fullName>
    </recommendedName>
    <alternativeName>
        <fullName evidence="5">30S ribosomal protein S9, chloroplastic</fullName>
    </alternativeName>
</protein>
<comment type="function">
    <text evidence="8 9">Component of the chloroplast ribosome (chloro-ribosome), a dedicated translation machinery responsible for the synthesis of chloroplast genome-encoded proteins, including proteins of the transcription and translation machinery and components of the photosynthetic apparatus.</text>
</comment>
<comment type="subunit">
    <text evidence="2 3 4">Component of the chloroplast small ribosomal subunit (SSU). Mature 70S chloroplast ribosomes of higher plants consist of a small (30S) and a large (50S) subunit. The 30S small subunit contains 1 molecule of ribosomal RNA (16S rRNA) and 24 different proteins. The 50S large subunit contains 3 rRNA molecules (23S, 5S and 4.5S rRNA) and 33 different proteins (PubMed:10874039, PubMed:28007896). uS9c binds directly to 16S ribosomal RNA (PubMed:10874039). uS9c interacts with translation factor pY (PSRP1) (PubMed:18042701).</text>
</comment>
<comment type="subcellular location">
    <subcellularLocation>
        <location evidence="2 4">Plastid</location>
        <location evidence="2 4">Chloroplast</location>
    </subcellularLocation>
</comment>
<comment type="mass spectrometry" mass="17106.0" method="Electrospray" evidence="2"/>
<comment type="similarity">
    <text evidence="7">Belongs to the universal ribosomal protein uS9 family.</text>
</comment>
<evidence type="ECO:0000256" key="1">
    <source>
        <dbReference type="SAM" id="MobiDB-lite"/>
    </source>
</evidence>
<evidence type="ECO:0000269" key="2">
    <source>
    </source>
</evidence>
<evidence type="ECO:0000269" key="3">
    <source>
    </source>
</evidence>
<evidence type="ECO:0000269" key="4">
    <source>
    </source>
</evidence>
<evidence type="ECO:0000303" key="5">
    <source>
    </source>
</evidence>
<evidence type="ECO:0000303" key="6">
    <source>
    </source>
</evidence>
<evidence type="ECO:0000305" key="7"/>
<evidence type="ECO:0000305" key="8">
    <source>
    </source>
</evidence>
<evidence type="ECO:0000305" key="9">
    <source>
    </source>
</evidence>
<gene>
    <name type="primary">PRPS9</name>
    <name type="ORF">SOVF_016530</name>
</gene>
<accession>P82278</accession>
<accession>A0A0K9RY17</accession>
<sequence length="208" mass="22382">MAVSISSLTSSFASLSFTSNLTPKPQTLPMARTKPFSLSNPAVVKPLVITATSATAPVEVAETADLEKFVKSRLPGGFAAQTVIGTGRRKCAIARVVLQEGTGKFIINYRDAKEYLQGNPLWLQYVKTPLATLGYETNYDVFVKAHGGGLSGQAQAISLGVARALLKVSASHRAPLKQEGLLTRDSRIVERKKPGLKKARKAPQFSKR</sequence>
<dbReference type="EMBL" id="KQ133176">
    <property type="protein sequence ID" value="KNA24353.1"/>
    <property type="molecule type" value="Genomic_DNA"/>
</dbReference>
<dbReference type="EMBL" id="AF242547">
    <property type="protein sequence ID" value="AAF64170.1"/>
    <property type="molecule type" value="mRNA"/>
</dbReference>
<dbReference type="PDB" id="4V61">
    <property type="method" value="EM"/>
    <property type="resolution" value="9.40 A"/>
    <property type="chains" value="AI=12-208"/>
</dbReference>
<dbReference type="PDB" id="5MMJ">
    <property type="method" value="EM"/>
    <property type="resolution" value="3.65 A"/>
    <property type="chains" value="i=1-208"/>
</dbReference>
<dbReference type="PDB" id="5MMM">
    <property type="method" value="EM"/>
    <property type="resolution" value="3.40 A"/>
    <property type="chains" value="i=1-208"/>
</dbReference>
<dbReference type="PDB" id="5X8P">
    <property type="method" value="EM"/>
    <property type="resolution" value="3.40 A"/>
    <property type="chains" value="i=52-208"/>
</dbReference>
<dbReference type="PDB" id="5X8R">
    <property type="method" value="EM"/>
    <property type="resolution" value="3.70 A"/>
    <property type="chains" value="i=52-208"/>
</dbReference>
<dbReference type="PDB" id="6ERI">
    <property type="method" value="EM"/>
    <property type="resolution" value="3.00 A"/>
    <property type="chains" value="BI=67-207"/>
</dbReference>
<dbReference type="PDBsum" id="4V61"/>
<dbReference type="PDBsum" id="5MMJ"/>
<dbReference type="PDBsum" id="5MMM"/>
<dbReference type="PDBsum" id="5X8P"/>
<dbReference type="PDBsum" id="5X8R"/>
<dbReference type="PDBsum" id="6ERI"/>
<dbReference type="EMDB" id="EMD-3532"/>
<dbReference type="EMDB" id="EMD-3533"/>
<dbReference type="EMDB" id="EMD-3941"/>
<dbReference type="EMDB" id="EMD-6709"/>
<dbReference type="EMDB" id="EMD-6710"/>
<dbReference type="SMR" id="P82278"/>
<dbReference type="STRING" id="3562.P82278"/>
<dbReference type="iPTMnet" id="P82278"/>
<dbReference type="OrthoDB" id="10254627at2759"/>
<dbReference type="Proteomes" id="UP001155700">
    <property type="component" value="Unplaced"/>
</dbReference>
<dbReference type="GO" id="GO:0009507">
    <property type="term" value="C:chloroplast"/>
    <property type="evidence" value="ECO:0007669"/>
    <property type="project" value="UniProtKB-SubCell"/>
</dbReference>
<dbReference type="GO" id="GO:0000312">
    <property type="term" value="C:plastid small ribosomal subunit"/>
    <property type="evidence" value="ECO:0000318"/>
    <property type="project" value="GO_Central"/>
</dbReference>
<dbReference type="GO" id="GO:0003723">
    <property type="term" value="F:RNA binding"/>
    <property type="evidence" value="ECO:0000318"/>
    <property type="project" value="GO_Central"/>
</dbReference>
<dbReference type="GO" id="GO:0019843">
    <property type="term" value="F:rRNA binding"/>
    <property type="evidence" value="ECO:0007669"/>
    <property type="project" value="UniProtKB-KW"/>
</dbReference>
<dbReference type="GO" id="GO:0003735">
    <property type="term" value="F:structural constituent of ribosome"/>
    <property type="evidence" value="ECO:0000318"/>
    <property type="project" value="GO_Central"/>
</dbReference>
<dbReference type="GO" id="GO:0006412">
    <property type="term" value="P:translation"/>
    <property type="evidence" value="ECO:0007669"/>
    <property type="project" value="InterPro"/>
</dbReference>
<dbReference type="FunFam" id="3.30.230.10:FF:000001">
    <property type="entry name" value="30S ribosomal protein S9"/>
    <property type="match status" value="1"/>
</dbReference>
<dbReference type="Gene3D" id="3.30.230.10">
    <property type="match status" value="1"/>
</dbReference>
<dbReference type="HAMAP" id="MF_00532_B">
    <property type="entry name" value="Ribosomal_uS9_B"/>
    <property type="match status" value="1"/>
</dbReference>
<dbReference type="InterPro" id="IPR020568">
    <property type="entry name" value="Ribosomal_Su5_D2-typ_SF"/>
</dbReference>
<dbReference type="InterPro" id="IPR000754">
    <property type="entry name" value="Ribosomal_uS9"/>
</dbReference>
<dbReference type="InterPro" id="IPR023035">
    <property type="entry name" value="Ribosomal_uS9_bac/plastid"/>
</dbReference>
<dbReference type="InterPro" id="IPR020574">
    <property type="entry name" value="Ribosomal_uS9_CS"/>
</dbReference>
<dbReference type="InterPro" id="IPR014721">
    <property type="entry name" value="Ribsml_uS5_D2-typ_fold_subgr"/>
</dbReference>
<dbReference type="NCBIfam" id="NF001099">
    <property type="entry name" value="PRK00132.1"/>
    <property type="match status" value="1"/>
</dbReference>
<dbReference type="PANTHER" id="PTHR21569">
    <property type="entry name" value="RIBOSOMAL PROTEIN S9"/>
    <property type="match status" value="1"/>
</dbReference>
<dbReference type="PANTHER" id="PTHR21569:SF1">
    <property type="entry name" value="SMALL RIBOSOMAL SUBUNIT PROTEIN US9M"/>
    <property type="match status" value="1"/>
</dbReference>
<dbReference type="Pfam" id="PF00380">
    <property type="entry name" value="Ribosomal_S9"/>
    <property type="match status" value="1"/>
</dbReference>
<dbReference type="SUPFAM" id="SSF54211">
    <property type="entry name" value="Ribosomal protein S5 domain 2-like"/>
    <property type="match status" value="1"/>
</dbReference>
<dbReference type="PROSITE" id="PS00360">
    <property type="entry name" value="RIBOSOMAL_S9"/>
    <property type="match status" value="1"/>
</dbReference>
<keyword id="KW-0002">3D-structure</keyword>
<keyword id="KW-0007">Acetylation</keyword>
<keyword id="KW-0150">Chloroplast</keyword>
<keyword id="KW-0903">Direct protein sequencing</keyword>
<keyword id="KW-0934">Plastid</keyword>
<keyword id="KW-1185">Reference proteome</keyword>
<keyword id="KW-0687">Ribonucleoprotein</keyword>
<keyword id="KW-0689">Ribosomal protein</keyword>
<keyword id="KW-0694">RNA-binding</keyword>
<keyword id="KW-0699">rRNA-binding</keyword>
<keyword id="KW-0809">Transit peptide</keyword>
<reference key="1">
    <citation type="journal article" date="2014" name="Nature">
        <title>The genome of the recently domesticated crop plant sugar beet (Beta vulgaris).</title>
        <authorList>
            <person name="Dohm J.C."/>
            <person name="Minoche A.E."/>
            <person name="Holtgraewe D."/>
            <person name="Capella-Gutierrez S."/>
            <person name="Zakrzewski F."/>
            <person name="Tafer H."/>
            <person name="Rupp O."/>
            <person name="Soerensen T.R."/>
            <person name="Stracke R."/>
            <person name="Reinhardt R."/>
            <person name="Goesmann A."/>
            <person name="Kraft T."/>
            <person name="Schulz B."/>
            <person name="Stadler P.F."/>
            <person name="Schmidt T."/>
            <person name="Gabaldon T."/>
            <person name="Lehrach H."/>
            <person name="Weisshaar B."/>
            <person name="Himmelbauer H."/>
        </authorList>
    </citation>
    <scope>NUCLEOTIDE SEQUENCE [LARGE SCALE GENOMIC DNA]</scope>
    <source>
        <strain>cv. Viroflay</strain>
        <tissue>Leaf</tissue>
    </source>
</reference>
<reference key="2">
    <citation type="journal article" date="2000" name="J. Biol. Chem.">
        <title>The plastid ribosomal proteins. Identification of all the proteins in the 30S subunit of an organelle ribosome (chloroplast).</title>
        <authorList>
            <person name="Yamaguchi K."/>
            <person name="von Knoblauch K."/>
            <person name="Subramanian A.R."/>
        </authorList>
    </citation>
    <scope>NUCLEOTIDE SEQUENCE [MRNA]</scope>
    <scope>PROTEIN SEQUENCE OF 52-61; 103-114 AND 117-128</scope>
    <scope>SUBUNIT</scope>
    <scope>SUBCELLULAR LOCATION</scope>
    <scope>ACETYLATION AT THR-52</scope>
    <scope>MASS SPECTROMETRY</scope>
    <source>
        <strain>cv. Alwaro</strain>
        <tissue>Leaf</tissue>
    </source>
</reference>
<reference key="3">
    <citation type="journal article" date="2007" name="Proc. Natl. Acad. Sci. U.S.A.">
        <title>Cryo-EM study of the spinach chloroplast ribosome reveals the structural and functional roles of plastid-specific ribosomal proteins.</title>
        <authorList>
            <person name="Sharma M.R."/>
            <person name="Wilson D.N."/>
            <person name="Datta P.P."/>
            <person name="Barat C."/>
            <person name="Schluenzen F."/>
            <person name="Fucini P."/>
            <person name="Agrawal R.K."/>
        </authorList>
    </citation>
    <scope>STRUCTURE BY ELECTRON MICROSCOPY (9.4 ANGSTROMS)</scope>
    <scope>INTERACTION WITH PSRP1</scope>
</reference>
<reference key="4">
    <citation type="journal article" date="2017" name="EMBO J.">
        <title>The complete structure of the chloroplast 70S ribosome in complex with translation factor pY.</title>
        <authorList>
            <person name="Bieri P."/>
            <person name="Leibundgut M."/>
            <person name="Saurer M."/>
            <person name="Boehringer D."/>
            <person name="Ban N."/>
        </authorList>
    </citation>
    <scope>STRUCTURE BY ELECTRON MICROSCOPY (3.40 ANGSTROMS)</scope>
    <scope>SUBUNIT</scope>
    <scope>SUBCELLULAR LOCATION</scope>
</reference>
<organism evidence="7">
    <name type="scientific">Spinacia oleracea</name>
    <name type="common">Spinach</name>
    <dbReference type="NCBI Taxonomy" id="3562"/>
    <lineage>
        <taxon>Eukaryota</taxon>
        <taxon>Viridiplantae</taxon>
        <taxon>Streptophyta</taxon>
        <taxon>Embryophyta</taxon>
        <taxon>Tracheophyta</taxon>
        <taxon>Spermatophyta</taxon>
        <taxon>Magnoliopsida</taxon>
        <taxon>eudicotyledons</taxon>
        <taxon>Gunneridae</taxon>
        <taxon>Pentapetalae</taxon>
        <taxon>Caryophyllales</taxon>
        <taxon>Chenopodiaceae</taxon>
        <taxon>Chenopodioideae</taxon>
        <taxon>Anserineae</taxon>
        <taxon>Spinacia</taxon>
    </lineage>
</organism>